<evidence type="ECO:0000250" key="1"/>
<evidence type="ECO:0000255" key="2"/>
<evidence type="ECO:0000305" key="3"/>
<feature type="chain" id="PRO_0000277551" description="Ferrous iron permease EfeU">
    <location>
        <begin position="1"/>
        <end position="282"/>
    </location>
</feature>
<feature type="topological domain" description="Periplasmic" evidence="2">
    <location>
        <position position="1"/>
    </location>
</feature>
<feature type="transmembrane region" description="Helical" evidence="2">
    <location>
        <begin position="2"/>
        <end position="22"/>
    </location>
</feature>
<feature type="topological domain" description="Cytoplasmic" evidence="2">
    <location>
        <begin position="23"/>
        <end position="35"/>
    </location>
</feature>
<feature type="transmembrane region" description="Helical" evidence="2">
    <location>
        <begin position="36"/>
        <end position="56"/>
    </location>
</feature>
<feature type="topological domain" description="Periplasmic" evidence="2">
    <location>
        <begin position="57"/>
        <end position="69"/>
    </location>
</feature>
<feature type="transmembrane region" description="Helical" evidence="2">
    <location>
        <begin position="70"/>
        <end position="90"/>
    </location>
</feature>
<feature type="topological domain" description="Cytoplasmic" evidence="2">
    <location>
        <begin position="91"/>
        <end position="118"/>
    </location>
</feature>
<feature type="transmembrane region" description="Helical" evidence="2">
    <location>
        <begin position="119"/>
        <end position="139"/>
    </location>
</feature>
<feature type="topological domain" description="Periplasmic" evidence="2">
    <location>
        <begin position="140"/>
        <end position="147"/>
    </location>
</feature>
<feature type="transmembrane region" description="Helical" evidence="2">
    <location>
        <begin position="148"/>
        <end position="168"/>
    </location>
</feature>
<feature type="topological domain" description="Cytoplasmic" evidence="2">
    <location>
        <begin position="169"/>
        <end position="179"/>
    </location>
</feature>
<feature type="transmembrane region" description="Helical" evidence="2">
    <location>
        <begin position="180"/>
        <end position="200"/>
    </location>
</feature>
<feature type="topological domain" description="Periplasmic" evidence="2">
    <location>
        <begin position="201"/>
        <end position="244"/>
    </location>
</feature>
<feature type="transmembrane region" description="Helical" evidence="2">
    <location>
        <begin position="245"/>
        <end position="265"/>
    </location>
</feature>
<feature type="topological domain" description="Cytoplasmic" evidence="2">
    <location>
        <begin position="266"/>
        <end position="282"/>
    </location>
</feature>
<protein>
    <recommendedName>
        <fullName>Ferrous iron permease EfeU</fullName>
    </recommendedName>
    <alternativeName>
        <fullName>Fe(2+) ion permease EfeU</fullName>
    </alternativeName>
    <alternativeName>
        <fullName>Ferrous iron uptake protein</fullName>
    </alternativeName>
</protein>
<comment type="function">
    <text evidence="1">Uptake of Fe(2+) ions across the membrane.</text>
</comment>
<comment type="subunit">
    <text evidence="1">Part of a ferrous iron transporter composed of EfeU, EfeO and EfeB.</text>
</comment>
<comment type="subcellular location">
    <subcellularLocation>
        <location evidence="1">Cell inner membrane</location>
        <topology evidence="1">Multi-pass membrane protein</topology>
    </subcellularLocation>
</comment>
<comment type="similarity">
    <text evidence="3">Belongs to the oxidase-dependent Fe transporter (OFeT) (TC 9.A.10.1) family.</text>
</comment>
<name>EFEU_YERPN</name>
<accession>Q1CHD3</accession>
<accession>C4GUG1</accession>
<proteinExistence type="inferred from homology"/>
<gene>
    <name type="primary">efeU</name>
    <name type="ordered locus">YPN_2269</name>
    <name type="ORF">YP516_2550</name>
</gene>
<organism>
    <name type="scientific">Yersinia pestis bv. Antiqua (strain Nepal516)</name>
    <dbReference type="NCBI Taxonomy" id="377628"/>
    <lineage>
        <taxon>Bacteria</taxon>
        <taxon>Pseudomonadati</taxon>
        <taxon>Pseudomonadota</taxon>
        <taxon>Gammaproteobacteria</taxon>
        <taxon>Enterobacterales</taxon>
        <taxon>Yersiniaceae</taxon>
        <taxon>Yersinia</taxon>
    </lineage>
</organism>
<reference key="1">
    <citation type="journal article" date="2006" name="J. Bacteriol.">
        <title>Complete genome sequence of Yersinia pestis strains Antiqua and Nepal516: evidence of gene reduction in an emerging pathogen.</title>
        <authorList>
            <person name="Chain P.S.G."/>
            <person name="Hu P."/>
            <person name="Malfatti S.A."/>
            <person name="Radnedge L."/>
            <person name="Larimer F."/>
            <person name="Vergez L.M."/>
            <person name="Worsham P."/>
            <person name="Chu M.C."/>
            <person name="Andersen G.L."/>
        </authorList>
    </citation>
    <scope>NUCLEOTIDE SEQUENCE [LARGE SCALE GENOMIC DNA]</scope>
    <source>
        <strain>Nepal516</strain>
    </source>
</reference>
<reference key="2">
    <citation type="submission" date="2009-04" db="EMBL/GenBank/DDBJ databases">
        <title>Yersinia pestis Nepal516A whole genome shotgun sequencing project.</title>
        <authorList>
            <person name="Plunkett G. III"/>
            <person name="Anderson B.D."/>
            <person name="Baumler D.J."/>
            <person name="Burland V."/>
            <person name="Cabot E.L."/>
            <person name="Glasner J.D."/>
            <person name="Mau B."/>
            <person name="Neeno-Eckwall E."/>
            <person name="Perna N.T."/>
            <person name="Munk A.C."/>
            <person name="Tapia R."/>
            <person name="Green L.D."/>
            <person name="Rogers Y.C."/>
            <person name="Detter J.C."/>
            <person name="Bruce D.C."/>
            <person name="Brettin T.S."/>
        </authorList>
    </citation>
    <scope>NUCLEOTIDE SEQUENCE [LARGE SCALE GENOMIC DNA]</scope>
    <source>
        <strain>Nepal516</strain>
    </source>
</reference>
<keyword id="KW-0997">Cell inner membrane</keyword>
<keyword id="KW-1003">Cell membrane</keyword>
<keyword id="KW-0406">Ion transport</keyword>
<keyword id="KW-0408">Iron</keyword>
<keyword id="KW-0410">Iron transport</keyword>
<keyword id="KW-0472">Membrane</keyword>
<keyword id="KW-0812">Transmembrane</keyword>
<keyword id="KW-1133">Transmembrane helix</keyword>
<keyword id="KW-0813">Transport</keyword>
<sequence length="282" mass="30688">MFVPFLIMFREGLEAALIVSLIASYLKRTQRGQWMGAVWVGVVVAAVLCLAIGIFINETTGEFPQKQQELFEGIIAVVAVCILTYMVFWMRKVSKSVKVHLEGAIDNALNSGRGQGWALVAMVFFAVAREGLESVFFLLAAFQQDVGIGAPIGAILGLVCAILVGMAIYWGGVKLHLAKFFKWTSLFILFVAAGLAAGAIRAFHEAGLWNHFQDIAFDLTDVLSTHSLLGTFLEGMFGYQEAPTVSEVSVYFIYLIPALILFFLPPRSTAGSAIAAARKINP</sequence>
<dbReference type="EMBL" id="CP000305">
    <property type="protein sequence ID" value="ABG18597.1"/>
    <property type="molecule type" value="Genomic_DNA"/>
</dbReference>
<dbReference type="EMBL" id="ACNQ01000013">
    <property type="protein sequence ID" value="EEO76348.1"/>
    <property type="molecule type" value="Genomic_DNA"/>
</dbReference>
<dbReference type="RefSeq" id="WP_002211165.1">
    <property type="nucleotide sequence ID" value="NZ_ACNQ01000013.1"/>
</dbReference>
<dbReference type="GeneID" id="57976727"/>
<dbReference type="KEGG" id="ypn:YPN_2269"/>
<dbReference type="HOGENOM" id="CLU_077905_0_0_6"/>
<dbReference type="Proteomes" id="UP000008936">
    <property type="component" value="Chromosome"/>
</dbReference>
<dbReference type="GO" id="GO:0033573">
    <property type="term" value="C:high-affinity iron permease complex"/>
    <property type="evidence" value="ECO:0007669"/>
    <property type="project" value="InterPro"/>
</dbReference>
<dbReference type="GO" id="GO:0015093">
    <property type="term" value="F:ferrous iron transmembrane transporter activity"/>
    <property type="evidence" value="ECO:0007669"/>
    <property type="project" value="TreeGrafter"/>
</dbReference>
<dbReference type="InterPro" id="IPR004923">
    <property type="entry name" value="FTR1/Fip1/EfeU"/>
</dbReference>
<dbReference type="NCBIfam" id="NF041756">
    <property type="entry name" value="EfeU"/>
    <property type="match status" value="1"/>
</dbReference>
<dbReference type="PANTHER" id="PTHR31632">
    <property type="entry name" value="IRON TRANSPORTER FTH1"/>
    <property type="match status" value="1"/>
</dbReference>
<dbReference type="PANTHER" id="PTHR31632:SF2">
    <property type="entry name" value="PLASMA MEMBRANE IRON PERMEASE"/>
    <property type="match status" value="1"/>
</dbReference>
<dbReference type="Pfam" id="PF03239">
    <property type="entry name" value="FTR1"/>
    <property type="match status" value="1"/>
</dbReference>